<reference key="1">
    <citation type="submission" date="2005-08" db="EMBL/GenBank/DDBJ databases">
        <authorList>
            <consortium name="NIH - Mammalian Gene Collection (MGC) project"/>
        </authorList>
    </citation>
    <scope>NUCLEOTIDE SEQUENCE [LARGE SCALE MRNA]</scope>
    <source>
        <strain>Hereford</strain>
        <tissue>Mammary gland</tissue>
    </source>
</reference>
<organism>
    <name type="scientific">Bos taurus</name>
    <name type="common">Bovine</name>
    <dbReference type="NCBI Taxonomy" id="9913"/>
    <lineage>
        <taxon>Eukaryota</taxon>
        <taxon>Metazoa</taxon>
        <taxon>Chordata</taxon>
        <taxon>Craniata</taxon>
        <taxon>Vertebrata</taxon>
        <taxon>Euteleostomi</taxon>
        <taxon>Mammalia</taxon>
        <taxon>Eutheria</taxon>
        <taxon>Laurasiatheria</taxon>
        <taxon>Artiodactyla</taxon>
        <taxon>Ruminantia</taxon>
        <taxon>Pecora</taxon>
        <taxon>Bovidae</taxon>
        <taxon>Bovinae</taxon>
        <taxon>Bos</taxon>
    </lineage>
</organism>
<name>T4S18_BOVIN</name>
<feature type="chain" id="PRO_0000284969" description="Transmembrane 4 L6 family member 18">
    <location>
        <begin position="1"/>
        <end position="201"/>
    </location>
</feature>
<feature type="topological domain" description="Cytoplasmic" evidence="1">
    <location>
        <begin position="1"/>
        <end position="9"/>
    </location>
</feature>
<feature type="transmembrane region" description="Helical" evidence="1">
    <location>
        <begin position="10"/>
        <end position="30"/>
    </location>
</feature>
<feature type="topological domain" description="Extracellular" evidence="1">
    <location>
        <begin position="31"/>
        <end position="49"/>
    </location>
</feature>
<feature type="transmembrane region" description="Helical" evidence="1">
    <location>
        <begin position="50"/>
        <end position="70"/>
    </location>
</feature>
<feature type="topological domain" description="Cytoplasmic" evidence="1">
    <location>
        <begin position="71"/>
        <end position="93"/>
    </location>
</feature>
<feature type="transmembrane region" description="Helical" evidence="1">
    <location>
        <begin position="94"/>
        <end position="114"/>
    </location>
</feature>
<feature type="topological domain" description="Extracellular" evidence="1">
    <location>
        <begin position="115"/>
        <end position="157"/>
    </location>
</feature>
<feature type="transmembrane region" description="Helical" evidence="1">
    <location>
        <begin position="158"/>
        <end position="178"/>
    </location>
</feature>
<feature type="topological domain" description="Cytoplasmic" evidence="1">
    <location>
        <begin position="179"/>
        <end position="201"/>
    </location>
</feature>
<proteinExistence type="evidence at transcript level"/>
<evidence type="ECO:0000255" key="1"/>
<evidence type="ECO:0000305" key="2"/>
<protein>
    <recommendedName>
        <fullName>Transmembrane 4 L6 family member 18</fullName>
    </recommendedName>
</protein>
<accession>Q3T110</accession>
<gene>
    <name type="primary">TM4SF18</name>
</gene>
<comment type="subcellular location">
    <subcellularLocation>
        <location evidence="2">Membrane</location>
        <topology evidence="2">Multi-pass membrane protein</topology>
    </subcellularLocation>
</comment>
<comment type="similarity">
    <text evidence="2">Belongs to the L6 tetraspanin family.</text>
</comment>
<sequence length="201" mass="22199">MGSRKCGSCLSSLLIPLALWSIIVNILLYFPNGQASYASSNKLTNYVWYFEGICFSGIMMLVVAAVLLVLENDNNYKCCQSENCSKKYMTVLSMIFSALGIAFSGYCLVISALGLLQGPYCRTLDGWEYAFEGTAGRFLTDSREWIQCLEPAHVVEWNIILFSILIALSGLQVIVCLIRVVIQLSKSLCGTYSVIIQPGII</sequence>
<dbReference type="EMBL" id="BC102174">
    <property type="protein sequence ID" value="AAI02175.1"/>
    <property type="molecule type" value="mRNA"/>
</dbReference>
<dbReference type="RefSeq" id="NP_001029459.1">
    <property type="nucleotide sequence ID" value="NM_001034287.2"/>
</dbReference>
<dbReference type="RefSeq" id="NP_001171653.1">
    <property type="nucleotide sequence ID" value="NM_001184724.1"/>
</dbReference>
<dbReference type="FunCoup" id="Q3T110">
    <property type="interactions" value="20"/>
</dbReference>
<dbReference type="STRING" id="9913.ENSBTAP00000062224"/>
<dbReference type="PaxDb" id="9913-ENSBTAP00000026585"/>
<dbReference type="Ensembl" id="ENSBTAT00000026585.6">
    <property type="protein sequence ID" value="ENSBTAP00000026585.6"/>
    <property type="gene ID" value="ENSBTAG00000019960.6"/>
</dbReference>
<dbReference type="GeneID" id="507280"/>
<dbReference type="KEGG" id="bta:507280"/>
<dbReference type="CTD" id="116441"/>
<dbReference type="VGNC" id="VGNC:35904">
    <property type="gene designation" value="TM4SF18"/>
</dbReference>
<dbReference type="eggNOG" id="ENOG502QS18">
    <property type="taxonomic scope" value="Eukaryota"/>
</dbReference>
<dbReference type="GeneTree" id="ENSGT01030000234590"/>
<dbReference type="HOGENOM" id="CLU_087168_2_0_1"/>
<dbReference type="InParanoid" id="Q3T110"/>
<dbReference type="OrthoDB" id="8697884at2759"/>
<dbReference type="TreeFam" id="TF331371"/>
<dbReference type="Proteomes" id="UP000009136">
    <property type="component" value="Chromosome 1"/>
</dbReference>
<dbReference type="GO" id="GO:0016020">
    <property type="term" value="C:membrane"/>
    <property type="evidence" value="ECO:0000318"/>
    <property type="project" value="GO_Central"/>
</dbReference>
<dbReference type="InterPro" id="IPR008661">
    <property type="entry name" value="L6_membrane"/>
</dbReference>
<dbReference type="PANTHER" id="PTHR14198">
    <property type="entry name" value="TRANSMEMBRANE 4 L6 FAMILY MEMBER 1-RELATED"/>
    <property type="match status" value="1"/>
</dbReference>
<dbReference type="PANTHER" id="PTHR14198:SF14">
    <property type="entry name" value="TRANSMEMBRANE 4 L6 FAMILY MEMBER 18"/>
    <property type="match status" value="1"/>
</dbReference>
<dbReference type="Pfam" id="PF05805">
    <property type="entry name" value="L6_membrane"/>
    <property type="match status" value="1"/>
</dbReference>
<keyword id="KW-0472">Membrane</keyword>
<keyword id="KW-1185">Reference proteome</keyword>
<keyword id="KW-0812">Transmembrane</keyword>
<keyword id="KW-1133">Transmembrane helix</keyword>